<feature type="chain" id="PRO_1000019445" description="Cysteine desulfurase IscS">
    <location>
        <begin position="1"/>
        <end position="404"/>
    </location>
</feature>
<feature type="active site" description="Cysteine persulfide intermediate" evidence="1">
    <location>
        <position position="328"/>
    </location>
</feature>
<feature type="binding site" evidence="1">
    <location>
        <begin position="75"/>
        <end position="76"/>
    </location>
    <ligand>
        <name>pyridoxal 5'-phosphate</name>
        <dbReference type="ChEBI" id="CHEBI:597326"/>
    </ligand>
</feature>
<feature type="binding site" evidence="1">
    <location>
        <position position="155"/>
    </location>
    <ligand>
        <name>pyridoxal 5'-phosphate</name>
        <dbReference type="ChEBI" id="CHEBI:597326"/>
    </ligand>
</feature>
<feature type="binding site" evidence="1">
    <location>
        <position position="183"/>
    </location>
    <ligand>
        <name>pyridoxal 5'-phosphate</name>
        <dbReference type="ChEBI" id="CHEBI:597326"/>
    </ligand>
</feature>
<feature type="binding site" evidence="1">
    <location>
        <begin position="203"/>
        <end position="205"/>
    </location>
    <ligand>
        <name>pyridoxal 5'-phosphate</name>
        <dbReference type="ChEBI" id="CHEBI:597326"/>
    </ligand>
</feature>
<feature type="binding site" evidence="1">
    <location>
        <position position="243"/>
    </location>
    <ligand>
        <name>pyridoxal 5'-phosphate</name>
        <dbReference type="ChEBI" id="CHEBI:597326"/>
    </ligand>
</feature>
<feature type="binding site" description="via persulfide group" evidence="1">
    <location>
        <position position="328"/>
    </location>
    <ligand>
        <name>[2Fe-2S] cluster</name>
        <dbReference type="ChEBI" id="CHEBI:190135"/>
        <note>ligand shared with IscU</note>
    </ligand>
</feature>
<feature type="modified residue" description="N6-(pyridoxal phosphate)lysine" evidence="1">
    <location>
        <position position="206"/>
    </location>
</feature>
<organism>
    <name type="scientific">Shewanella loihica (strain ATCC BAA-1088 / PV-4)</name>
    <dbReference type="NCBI Taxonomy" id="323850"/>
    <lineage>
        <taxon>Bacteria</taxon>
        <taxon>Pseudomonadati</taxon>
        <taxon>Pseudomonadota</taxon>
        <taxon>Gammaproteobacteria</taxon>
        <taxon>Alteromonadales</taxon>
        <taxon>Shewanellaceae</taxon>
        <taxon>Shewanella</taxon>
    </lineage>
</organism>
<gene>
    <name evidence="1" type="primary">iscS</name>
    <name type="ordered locus">Shew_2317</name>
</gene>
<sequence>MKLPIYLDYAATTPVDPRVAEKMMQYMTMDGIFGNPASRSHRYGWQAEEAVDIARNQVAELINADPREIVFTSGATESDNLAIKGVAHFYHKKGKHIITSKTEHKAVLDTCRQLEREGFEVTYLEPESNGIIPIEKLEAAMREDTILLSLMHVNNEIGVIHDIDAIGELCRAKKVIFHVDAAQSAGKLPIDLQKSKVDLMSISAHKMYGPKGIGALYVRRKPRIRLEATMHGGGHERGMRSGTLATHQIVGMGEAAAIAKADMESDNARIRRLRDRLWDGIKHIEETYINGDAEQRYCGSLNVSFNFVEGESLMMALKDLAVSSGSACTSASLEPSYVLRALGLDDEMAHSSIRFSIGRFTTEEEIDHAIETITKSIGQLREMSPLWEMFKDGVDLSTVQWAHH</sequence>
<reference key="1">
    <citation type="submission" date="2007-03" db="EMBL/GenBank/DDBJ databases">
        <title>Complete sequence of Shewanella loihica PV-4.</title>
        <authorList>
            <consortium name="US DOE Joint Genome Institute"/>
            <person name="Copeland A."/>
            <person name="Lucas S."/>
            <person name="Lapidus A."/>
            <person name="Barry K."/>
            <person name="Detter J.C."/>
            <person name="Glavina del Rio T."/>
            <person name="Hammon N."/>
            <person name="Israni S."/>
            <person name="Dalin E."/>
            <person name="Tice H."/>
            <person name="Pitluck S."/>
            <person name="Chain P."/>
            <person name="Malfatti S."/>
            <person name="Shin M."/>
            <person name="Vergez L."/>
            <person name="Schmutz J."/>
            <person name="Larimer F."/>
            <person name="Land M."/>
            <person name="Hauser L."/>
            <person name="Kyrpides N."/>
            <person name="Mikhailova N."/>
            <person name="Romine M.F."/>
            <person name="Serres G."/>
            <person name="Fredrickson J."/>
            <person name="Tiedje J."/>
            <person name="Richardson P."/>
        </authorList>
    </citation>
    <scope>NUCLEOTIDE SEQUENCE [LARGE SCALE GENOMIC DNA]</scope>
    <source>
        <strain>ATCC BAA-1088 / PV-4</strain>
    </source>
</reference>
<comment type="function">
    <text evidence="1">Master enzyme that delivers sulfur to a number of partners involved in Fe-S cluster assembly, tRNA modification or cofactor biosynthesis. Catalyzes the removal of elemental sulfur atoms from cysteine to produce alanine. Functions as a sulfur delivery protein for Fe-S cluster synthesis onto IscU, an Fe-S scaffold assembly protein, as well as other S acceptor proteins.</text>
</comment>
<comment type="catalytic activity">
    <reaction evidence="1">
        <text>(sulfur carrier)-H + L-cysteine = (sulfur carrier)-SH + L-alanine</text>
        <dbReference type="Rhea" id="RHEA:43892"/>
        <dbReference type="Rhea" id="RHEA-COMP:14737"/>
        <dbReference type="Rhea" id="RHEA-COMP:14739"/>
        <dbReference type="ChEBI" id="CHEBI:29917"/>
        <dbReference type="ChEBI" id="CHEBI:35235"/>
        <dbReference type="ChEBI" id="CHEBI:57972"/>
        <dbReference type="ChEBI" id="CHEBI:64428"/>
        <dbReference type="EC" id="2.8.1.7"/>
    </reaction>
</comment>
<comment type="cofactor">
    <cofactor evidence="1">
        <name>pyridoxal 5'-phosphate</name>
        <dbReference type="ChEBI" id="CHEBI:597326"/>
    </cofactor>
</comment>
<comment type="pathway">
    <text evidence="1">Cofactor biosynthesis; iron-sulfur cluster biosynthesis.</text>
</comment>
<comment type="subunit">
    <text evidence="1">Homodimer. Forms a heterotetramer with IscU, interacts with other sulfur acceptors.</text>
</comment>
<comment type="subcellular location">
    <subcellularLocation>
        <location evidence="1">Cytoplasm</location>
    </subcellularLocation>
</comment>
<comment type="similarity">
    <text evidence="1">Belongs to the class-V pyridoxal-phosphate-dependent aminotransferase family. NifS/IscS subfamily.</text>
</comment>
<evidence type="ECO:0000255" key="1">
    <source>
        <dbReference type="HAMAP-Rule" id="MF_00331"/>
    </source>
</evidence>
<dbReference type="EC" id="2.8.1.7" evidence="1"/>
<dbReference type="EMBL" id="CP000606">
    <property type="protein sequence ID" value="ABO24183.1"/>
    <property type="molecule type" value="Genomic_DNA"/>
</dbReference>
<dbReference type="RefSeq" id="WP_011866114.1">
    <property type="nucleotide sequence ID" value="NC_009092.1"/>
</dbReference>
<dbReference type="SMR" id="A3QFD5"/>
<dbReference type="STRING" id="323850.Shew_2317"/>
<dbReference type="KEGG" id="slo:Shew_2317"/>
<dbReference type="eggNOG" id="COG1104">
    <property type="taxonomic scope" value="Bacteria"/>
</dbReference>
<dbReference type="HOGENOM" id="CLU_003433_0_2_6"/>
<dbReference type="OrthoDB" id="9808002at2"/>
<dbReference type="UniPathway" id="UPA00266"/>
<dbReference type="Proteomes" id="UP000001558">
    <property type="component" value="Chromosome"/>
</dbReference>
<dbReference type="GO" id="GO:1990221">
    <property type="term" value="C:L-cysteine desulfurase complex"/>
    <property type="evidence" value="ECO:0007669"/>
    <property type="project" value="UniProtKB-ARBA"/>
</dbReference>
<dbReference type="GO" id="GO:0051537">
    <property type="term" value="F:2 iron, 2 sulfur cluster binding"/>
    <property type="evidence" value="ECO:0007669"/>
    <property type="project" value="UniProtKB-UniRule"/>
</dbReference>
<dbReference type="GO" id="GO:0031071">
    <property type="term" value="F:cysteine desulfurase activity"/>
    <property type="evidence" value="ECO:0007669"/>
    <property type="project" value="UniProtKB-UniRule"/>
</dbReference>
<dbReference type="GO" id="GO:0046872">
    <property type="term" value="F:metal ion binding"/>
    <property type="evidence" value="ECO:0007669"/>
    <property type="project" value="UniProtKB-KW"/>
</dbReference>
<dbReference type="GO" id="GO:0030170">
    <property type="term" value="F:pyridoxal phosphate binding"/>
    <property type="evidence" value="ECO:0007669"/>
    <property type="project" value="UniProtKB-UniRule"/>
</dbReference>
<dbReference type="GO" id="GO:0044571">
    <property type="term" value="P:[2Fe-2S] cluster assembly"/>
    <property type="evidence" value="ECO:0007669"/>
    <property type="project" value="UniProtKB-UniRule"/>
</dbReference>
<dbReference type="FunFam" id="3.40.640.10:FF:000003">
    <property type="entry name" value="Cysteine desulfurase IscS"/>
    <property type="match status" value="1"/>
</dbReference>
<dbReference type="FunFam" id="3.90.1150.10:FF:000002">
    <property type="entry name" value="Cysteine desulfurase IscS"/>
    <property type="match status" value="1"/>
</dbReference>
<dbReference type="Gene3D" id="3.90.1150.10">
    <property type="entry name" value="Aspartate Aminotransferase, domain 1"/>
    <property type="match status" value="1"/>
</dbReference>
<dbReference type="Gene3D" id="3.40.640.10">
    <property type="entry name" value="Type I PLP-dependent aspartate aminotransferase-like (Major domain)"/>
    <property type="match status" value="1"/>
</dbReference>
<dbReference type="HAMAP" id="MF_00331">
    <property type="entry name" value="Cys_desulf_IscS"/>
    <property type="match status" value="1"/>
</dbReference>
<dbReference type="InterPro" id="IPR000192">
    <property type="entry name" value="Aminotrans_V_dom"/>
</dbReference>
<dbReference type="InterPro" id="IPR020578">
    <property type="entry name" value="Aminotrans_V_PyrdxlP_BS"/>
</dbReference>
<dbReference type="InterPro" id="IPR010240">
    <property type="entry name" value="Cys_deSase_IscS"/>
</dbReference>
<dbReference type="InterPro" id="IPR016454">
    <property type="entry name" value="Cysteine_dSase"/>
</dbReference>
<dbReference type="InterPro" id="IPR015424">
    <property type="entry name" value="PyrdxlP-dep_Trfase"/>
</dbReference>
<dbReference type="InterPro" id="IPR015421">
    <property type="entry name" value="PyrdxlP-dep_Trfase_major"/>
</dbReference>
<dbReference type="InterPro" id="IPR015422">
    <property type="entry name" value="PyrdxlP-dep_Trfase_small"/>
</dbReference>
<dbReference type="NCBIfam" id="TIGR02006">
    <property type="entry name" value="IscS"/>
    <property type="match status" value="1"/>
</dbReference>
<dbReference type="NCBIfam" id="NF002806">
    <property type="entry name" value="PRK02948.1"/>
    <property type="match status" value="1"/>
</dbReference>
<dbReference type="NCBIfam" id="NF010611">
    <property type="entry name" value="PRK14012.1"/>
    <property type="match status" value="1"/>
</dbReference>
<dbReference type="PANTHER" id="PTHR11601:SF34">
    <property type="entry name" value="CYSTEINE DESULFURASE"/>
    <property type="match status" value="1"/>
</dbReference>
<dbReference type="PANTHER" id="PTHR11601">
    <property type="entry name" value="CYSTEINE DESULFURYLASE FAMILY MEMBER"/>
    <property type="match status" value="1"/>
</dbReference>
<dbReference type="Pfam" id="PF00266">
    <property type="entry name" value="Aminotran_5"/>
    <property type="match status" value="1"/>
</dbReference>
<dbReference type="PIRSF" id="PIRSF005572">
    <property type="entry name" value="NifS"/>
    <property type="match status" value="1"/>
</dbReference>
<dbReference type="SUPFAM" id="SSF53383">
    <property type="entry name" value="PLP-dependent transferases"/>
    <property type="match status" value="1"/>
</dbReference>
<dbReference type="PROSITE" id="PS00595">
    <property type="entry name" value="AA_TRANSFER_CLASS_5"/>
    <property type="match status" value="1"/>
</dbReference>
<proteinExistence type="inferred from homology"/>
<protein>
    <recommendedName>
        <fullName evidence="1">Cysteine desulfurase IscS</fullName>
        <ecNumber evidence="1">2.8.1.7</ecNumber>
    </recommendedName>
</protein>
<name>ISCS_SHELP</name>
<keyword id="KW-0001">2Fe-2S</keyword>
<keyword id="KW-0963">Cytoplasm</keyword>
<keyword id="KW-0408">Iron</keyword>
<keyword id="KW-0411">Iron-sulfur</keyword>
<keyword id="KW-0479">Metal-binding</keyword>
<keyword id="KW-0663">Pyridoxal phosphate</keyword>
<keyword id="KW-1185">Reference proteome</keyword>
<keyword id="KW-0808">Transferase</keyword>
<accession>A3QFD5</accession>